<accession>Q2SSF7</accession>
<name>LEPA_MYCCT</name>
<reference key="1">
    <citation type="submission" date="2005-09" db="EMBL/GenBank/DDBJ databases">
        <authorList>
            <person name="Glass J.I."/>
            <person name="Lartigue C."/>
            <person name="Pfannkoch C."/>
            <person name="Baden-Tillson H."/>
            <person name="Smith H.O."/>
            <person name="Venter J.C."/>
            <person name="Roske K."/>
            <person name="Wise K.S."/>
            <person name="Calcutt M.J."/>
            <person name="Nelson W.C."/>
            <person name="Nierman W.C."/>
        </authorList>
    </citation>
    <scope>NUCLEOTIDE SEQUENCE [LARGE SCALE GENOMIC DNA]</scope>
    <source>
        <strain>California kid / ATCC 27343 / NCTC 10154</strain>
    </source>
</reference>
<evidence type="ECO:0000255" key="1">
    <source>
        <dbReference type="HAMAP-Rule" id="MF_00071"/>
    </source>
</evidence>
<gene>
    <name evidence="1" type="primary">lepA</name>
    <name type="ordered locus">MCAP_0321</name>
</gene>
<protein>
    <recommendedName>
        <fullName evidence="1">Elongation factor 4</fullName>
        <shortName evidence="1">EF-4</shortName>
        <ecNumber evidence="1">3.6.5.n1</ecNumber>
    </recommendedName>
    <alternativeName>
        <fullName evidence="1">Ribosomal back-translocase LepA</fullName>
    </alternativeName>
</protein>
<organism>
    <name type="scientific">Mycoplasma capricolum subsp. capricolum (strain California kid / ATCC 27343 / NCTC 10154)</name>
    <dbReference type="NCBI Taxonomy" id="340047"/>
    <lineage>
        <taxon>Bacteria</taxon>
        <taxon>Bacillati</taxon>
        <taxon>Mycoplasmatota</taxon>
        <taxon>Mollicutes</taxon>
        <taxon>Mycoplasmataceae</taxon>
        <taxon>Mycoplasma</taxon>
    </lineage>
</organism>
<comment type="function">
    <text evidence="1">Required for accurate and efficient protein synthesis under certain stress conditions. May act as a fidelity factor of the translation reaction, by catalyzing a one-codon backward translocation of tRNAs on improperly translocated ribosomes. Back-translocation proceeds from a post-translocation (POST) complex to a pre-translocation (PRE) complex, thus giving elongation factor G a second chance to translocate the tRNAs correctly. Binds to ribosomes in a GTP-dependent manner.</text>
</comment>
<comment type="catalytic activity">
    <reaction evidence="1">
        <text>GTP + H2O = GDP + phosphate + H(+)</text>
        <dbReference type="Rhea" id="RHEA:19669"/>
        <dbReference type="ChEBI" id="CHEBI:15377"/>
        <dbReference type="ChEBI" id="CHEBI:15378"/>
        <dbReference type="ChEBI" id="CHEBI:37565"/>
        <dbReference type="ChEBI" id="CHEBI:43474"/>
        <dbReference type="ChEBI" id="CHEBI:58189"/>
        <dbReference type="EC" id="3.6.5.n1"/>
    </reaction>
</comment>
<comment type="subcellular location">
    <subcellularLocation>
        <location evidence="1">Cell membrane</location>
        <topology evidence="1">Peripheral membrane protein</topology>
        <orientation evidence="1">Cytoplasmic side</orientation>
    </subcellularLocation>
</comment>
<comment type="similarity">
    <text evidence="1">Belongs to the TRAFAC class translation factor GTPase superfamily. Classic translation factor GTPase family. LepA subfamily.</text>
</comment>
<dbReference type="EC" id="3.6.5.n1" evidence="1"/>
<dbReference type="EMBL" id="CP000123">
    <property type="protein sequence ID" value="ABC01252.1"/>
    <property type="molecule type" value="Genomic_DNA"/>
</dbReference>
<dbReference type="RefSeq" id="WP_011387207.1">
    <property type="nucleotide sequence ID" value="NC_007633.1"/>
</dbReference>
<dbReference type="SMR" id="Q2SSF7"/>
<dbReference type="GeneID" id="23778723"/>
<dbReference type="KEGG" id="mcp:MCAP_0321"/>
<dbReference type="HOGENOM" id="CLU_009995_3_3_14"/>
<dbReference type="PhylomeDB" id="Q2SSF7"/>
<dbReference type="Proteomes" id="UP000001928">
    <property type="component" value="Chromosome"/>
</dbReference>
<dbReference type="GO" id="GO:0005886">
    <property type="term" value="C:plasma membrane"/>
    <property type="evidence" value="ECO:0007669"/>
    <property type="project" value="UniProtKB-SubCell"/>
</dbReference>
<dbReference type="GO" id="GO:0005525">
    <property type="term" value="F:GTP binding"/>
    <property type="evidence" value="ECO:0007669"/>
    <property type="project" value="UniProtKB-UniRule"/>
</dbReference>
<dbReference type="GO" id="GO:0003924">
    <property type="term" value="F:GTPase activity"/>
    <property type="evidence" value="ECO:0007669"/>
    <property type="project" value="UniProtKB-UniRule"/>
</dbReference>
<dbReference type="GO" id="GO:0043022">
    <property type="term" value="F:ribosome binding"/>
    <property type="evidence" value="ECO:0007669"/>
    <property type="project" value="UniProtKB-UniRule"/>
</dbReference>
<dbReference type="GO" id="GO:0003746">
    <property type="term" value="F:translation elongation factor activity"/>
    <property type="evidence" value="ECO:0007669"/>
    <property type="project" value="UniProtKB-UniRule"/>
</dbReference>
<dbReference type="GO" id="GO:0045727">
    <property type="term" value="P:positive regulation of translation"/>
    <property type="evidence" value="ECO:0007669"/>
    <property type="project" value="UniProtKB-UniRule"/>
</dbReference>
<dbReference type="CDD" id="cd03699">
    <property type="entry name" value="EF4_II"/>
    <property type="match status" value="1"/>
</dbReference>
<dbReference type="CDD" id="cd16260">
    <property type="entry name" value="EF4_III"/>
    <property type="match status" value="1"/>
</dbReference>
<dbReference type="CDD" id="cd01890">
    <property type="entry name" value="LepA"/>
    <property type="match status" value="1"/>
</dbReference>
<dbReference type="CDD" id="cd03709">
    <property type="entry name" value="lepA_C"/>
    <property type="match status" value="1"/>
</dbReference>
<dbReference type="FunFam" id="3.40.50.300:FF:000078">
    <property type="entry name" value="Elongation factor 4"/>
    <property type="match status" value="1"/>
</dbReference>
<dbReference type="FunFam" id="2.40.30.10:FF:000015">
    <property type="entry name" value="Translation factor GUF1, mitochondrial"/>
    <property type="match status" value="1"/>
</dbReference>
<dbReference type="FunFam" id="3.30.70.240:FF:000007">
    <property type="entry name" value="Translation factor GUF1, mitochondrial"/>
    <property type="match status" value="1"/>
</dbReference>
<dbReference type="FunFam" id="3.30.70.2570:FF:000001">
    <property type="entry name" value="Translation factor GUF1, mitochondrial"/>
    <property type="match status" value="1"/>
</dbReference>
<dbReference type="FunFam" id="3.30.70.870:FF:000004">
    <property type="entry name" value="Translation factor GUF1, mitochondrial"/>
    <property type="match status" value="1"/>
</dbReference>
<dbReference type="Gene3D" id="3.30.70.240">
    <property type="match status" value="1"/>
</dbReference>
<dbReference type="Gene3D" id="3.30.70.2570">
    <property type="entry name" value="Elongation factor 4, C-terminal domain"/>
    <property type="match status" value="1"/>
</dbReference>
<dbReference type="Gene3D" id="3.30.70.870">
    <property type="entry name" value="Elongation Factor G (Translational Gtpase), domain 3"/>
    <property type="match status" value="1"/>
</dbReference>
<dbReference type="Gene3D" id="3.40.50.300">
    <property type="entry name" value="P-loop containing nucleotide triphosphate hydrolases"/>
    <property type="match status" value="1"/>
</dbReference>
<dbReference type="Gene3D" id="2.40.30.10">
    <property type="entry name" value="Translation factors"/>
    <property type="match status" value="1"/>
</dbReference>
<dbReference type="HAMAP" id="MF_00071">
    <property type="entry name" value="LepA"/>
    <property type="match status" value="1"/>
</dbReference>
<dbReference type="InterPro" id="IPR006297">
    <property type="entry name" value="EF-4"/>
</dbReference>
<dbReference type="InterPro" id="IPR035647">
    <property type="entry name" value="EFG_III/V"/>
</dbReference>
<dbReference type="InterPro" id="IPR000640">
    <property type="entry name" value="EFG_V-like"/>
</dbReference>
<dbReference type="InterPro" id="IPR004161">
    <property type="entry name" value="EFTu-like_2"/>
</dbReference>
<dbReference type="InterPro" id="IPR031157">
    <property type="entry name" value="G_TR_CS"/>
</dbReference>
<dbReference type="InterPro" id="IPR038363">
    <property type="entry name" value="LepA_C_sf"/>
</dbReference>
<dbReference type="InterPro" id="IPR013842">
    <property type="entry name" value="LepA_CTD"/>
</dbReference>
<dbReference type="InterPro" id="IPR035654">
    <property type="entry name" value="LepA_IV"/>
</dbReference>
<dbReference type="InterPro" id="IPR027417">
    <property type="entry name" value="P-loop_NTPase"/>
</dbReference>
<dbReference type="InterPro" id="IPR005225">
    <property type="entry name" value="Small_GTP-bd"/>
</dbReference>
<dbReference type="InterPro" id="IPR000795">
    <property type="entry name" value="T_Tr_GTP-bd_dom"/>
</dbReference>
<dbReference type="InterPro" id="IPR009000">
    <property type="entry name" value="Transl_B-barrel_sf"/>
</dbReference>
<dbReference type="NCBIfam" id="TIGR01393">
    <property type="entry name" value="lepA"/>
    <property type="match status" value="1"/>
</dbReference>
<dbReference type="NCBIfam" id="TIGR00231">
    <property type="entry name" value="small_GTP"/>
    <property type="match status" value="1"/>
</dbReference>
<dbReference type="PANTHER" id="PTHR43512:SF4">
    <property type="entry name" value="TRANSLATION FACTOR GUF1 HOMOLOG, CHLOROPLASTIC"/>
    <property type="match status" value="1"/>
</dbReference>
<dbReference type="PANTHER" id="PTHR43512">
    <property type="entry name" value="TRANSLATION FACTOR GUF1-RELATED"/>
    <property type="match status" value="1"/>
</dbReference>
<dbReference type="Pfam" id="PF00679">
    <property type="entry name" value="EFG_C"/>
    <property type="match status" value="1"/>
</dbReference>
<dbReference type="Pfam" id="PF00009">
    <property type="entry name" value="GTP_EFTU"/>
    <property type="match status" value="1"/>
</dbReference>
<dbReference type="Pfam" id="PF03144">
    <property type="entry name" value="GTP_EFTU_D2"/>
    <property type="match status" value="1"/>
</dbReference>
<dbReference type="Pfam" id="PF06421">
    <property type="entry name" value="LepA_C"/>
    <property type="match status" value="1"/>
</dbReference>
<dbReference type="PRINTS" id="PR00315">
    <property type="entry name" value="ELONGATNFCT"/>
</dbReference>
<dbReference type="SMART" id="SM00838">
    <property type="entry name" value="EFG_C"/>
    <property type="match status" value="1"/>
</dbReference>
<dbReference type="SUPFAM" id="SSF54980">
    <property type="entry name" value="EF-G C-terminal domain-like"/>
    <property type="match status" value="2"/>
</dbReference>
<dbReference type="SUPFAM" id="SSF52540">
    <property type="entry name" value="P-loop containing nucleoside triphosphate hydrolases"/>
    <property type="match status" value="1"/>
</dbReference>
<dbReference type="SUPFAM" id="SSF50447">
    <property type="entry name" value="Translation proteins"/>
    <property type="match status" value="1"/>
</dbReference>
<dbReference type="PROSITE" id="PS00301">
    <property type="entry name" value="G_TR_1"/>
    <property type="match status" value="1"/>
</dbReference>
<dbReference type="PROSITE" id="PS51722">
    <property type="entry name" value="G_TR_2"/>
    <property type="match status" value="1"/>
</dbReference>
<feature type="chain" id="PRO_0000265677" description="Elongation factor 4">
    <location>
        <begin position="1"/>
        <end position="600"/>
    </location>
</feature>
<feature type="domain" description="tr-type G">
    <location>
        <begin position="4"/>
        <end position="186"/>
    </location>
</feature>
<feature type="binding site" evidence="1">
    <location>
        <begin position="16"/>
        <end position="21"/>
    </location>
    <ligand>
        <name>GTP</name>
        <dbReference type="ChEBI" id="CHEBI:37565"/>
    </ligand>
</feature>
<feature type="binding site" evidence="1">
    <location>
        <begin position="133"/>
        <end position="136"/>
    </location>
    <ligand>
        <name>GTP</name>
        <dbReference type="ChEBI" id="CHEBI:37565"/>
    </ligand>
</feature>
<proteinExistence type="inferred from homology"/>
<keyword id="KW-1003">Cell membrane</keyword>
<keyword id="KW-0342">GTP-binding</keyword>
<keyword id="KW-0378">Hydrolase</keyword>
<keyword id="KW-0472">Membrane</keyword>
<keyword id="KW-0547">Nucleotide-binding</keyword>
<keyword id="KW-0648">Protein biosynthesis</keyword>
<sequence length="600" mass="67701">MDKSKIRNFSIIAHIDHGKSTLADRILELTNTVEKREMQDQLLDSMDIERERGITIKLNSVQLKYHSKDDKDYIFNLIDTPGHVDFTYEVSRSLAACEGAILVVDASQGVEAQTLANVYLAIDSNLEIIPVINKIDLPSADVDKVKQEIEEIIGLDCSNAPLISAKTGLNVQDVLQAIVDKIPPPSDAIDNAPLKALIFDSYYDKYLGVVMSIRLKQGMLKVGDKIKLMSTNAEYEVTSLGIKTPKIVKKDFLEAGEVGWVAASIKTIKDVNVGDTITSVLNPAKEPLDGYKKLKPMVYCGIYPIDTNKYQDFKEALEKIELSDSSLVYEPETSQALGFGFRCGFLGLLHMEVIQERLEREYNLELIATAPSVVYKVHLTNKQVIELDNPALLPEAQKISKIEEPFVEIKIATPSEYIGDLMNLCQNKLGIYKNMEVIDNNRRILIYQMPLAEIIFDFFNKLKSISKGYASFEYELIGYKESKLVRMDIKLNGEMVDAFSMIVNQKFAYQRGSALTLKLKELIPRQNFEVPVQATIGNKVISRETIKAYRKDVTWKLHAADKSRRKKLLEKQKEGKKKMKEIGTVEVPQEAFVAILKIDD</sequence>